<evidence type="ECO:0000255" key="1">
    <source>
        <dbReference type="HAMAP-Rule" id="MF_00293"/>
    </source>
</evidence>
<accession>Q06RA4</accession>
<proteinExistence type="inferred from homology"/>
<protein>
    <recommendedName>
        <fullName evidence="1">Protein PsbN</fullName>
    </recommendedName>
</protein>
<comment type="function">
    <text evidence="1">May play a role in photosystem I and II biogenesis.</text>
</comment>
<comment type="subcellular location">
    <subcellularLocation>
        <location evidence="1">Plastid</location>
        <location evidence="1">Chloroplast thylakoid membrane</location>
        <topology evidence="1">Single-pass membrane protein</topology>
    </subcellularLocation>
</comment>
<comment type="similarity">
    <text evidence="1">Belongs to the PsbN family.</text>
</comment>
<comment type="caution">
    <text evidence="1">Originally thought to be a component of PSII; based on experiments in Synechocystis, N.tabacum and barley, and its absence from PSII in T.elongatus and T.vulcanus, this is probably not true.</text>
</comment>
<feature type="chain" id="PRO_0000276272" description="Protein PsbN">
    <location>
        <begin position="1"/>
        <end position="43"/>
    </location>
</feature>
<feature type="transmembrane region" description="Helical" evidence="1">
    <location>
        <begin position="7"/>
        <end position="29"/>
    </location>
</feature>
<organism>
    <name type="scientific">Jasminum nudiflorum</name>
    <name type="common">Winter jasmine</name>
    <dbReference type="NCBI Taxonomy" id="126431"/>
    <lineage>
        <taxon>Eukaryota</taxon>
        <taxon>Viridiplantae</taxon>
        <taxon>Streptophyta</taxon>
        <taxon>Embryophyta</taxon>
        <taxon>Tracheophyta</taxon>
        <taxon>Spermatophyta</taxon>
        <taxon>Magnoliopsida</taxon>
        <taxon>eudicotyledons</taxon>
        <taxon>Gunneridae</taxon>
        <taxon>Pentapetalae</taxon>
        <taxon>asterids</taxon>
        <taxon>lamiids</taxon>
        <taxon>Lamiales</taxon>
        <taxon>Oleaceae</taxon>
        <taxon>Jasmineae</taxon>
        <taxon>Jasminum</taxon>
    </lineage>
</organism>
<reference key="1">
    <citation type="journal article" date="2007" name="Mol. Biol. Evol.">
        <title>Gene relocations within chloroplast genomes of Jasminum and Menodora (Oleaceae) are due to multiple, overlapping inversions.</title>
        <authorList>
            <person name="Lee H.-L."/>
            <person name="Jansen R.K."/>
            <person name="Chumley T.W."/>
            <person name="Kim K.-J."/>
        </authorList>
    </citation>
    <scope>NUCLEOTIDE SEQUENCE [LARGE SCALE GENOMIC DNA]</scope>
</reference>
<geneLocation type="chloroplast"/>
<sequence length="43" mass="4722">METATLVAIFLSGLLVSFTGYALYTAFGQPSQQLRDPFEEHGD</sequence>
<gene>
    <name evidence="1" type="primary">psbN</name>
    <name type="ORF">JNC0827</name>
</gene>
<name>PSBN_JASNU</name>
<dbReference type="EMBL" id="DQ673255">
    <property type="protein sequence ID" value="ABG74654.1"/>
    <property type="molecule type" value="Genomic_DNA"/>
</dbReference>
<dbReference type="RefSeq" id="YP_778517.1">
    <property type="nucleotide sequence ID" value="NC_008407.1"/>
</dbReference>
<dbReference type="SMR" id="Q06RA4"/>
<dbReference type="GeneID" id="4319736"/>
<dbReference type="GO" id="GO:0009535">
    <property type="term" value="C:chloroplast thylakoid membrane"/>
    <property type="evidence" value="ECO:0007669"/>
    <property type="project" value="UniProtKB-SubCell"/>
</dbReference>
<dbReference type="GO" id="GO:0015979">
    <property type="term" value="P:photosynthesis"/>
    <property type="evidence" value="ECO:0007669"/>
    <property type="project" value="InterPro"/>
</dbReference>
<dbReference type="HAMAP" id="MF_00293">
    <property type="entry name" value="PSII_PsbN"/>
    <property type="match status" value="1"/>
</dbReference>
<dbReference type="InterPro" id="IPR003398">
    <property type="entry name" value="PSII_PsbN"/>
</dbReference>
<dbReference type="PANTHER" id="PTHR35326">
    <property type="entry name" value="PROTEIN PSBN"/>
    <property type="match status" value="1"/>
</dbReference>
<dbReference type="PANTHER" id="PTHR35326:SF3">
    <property type="entry name" value="PROTEIN PSBN"/>
    <property type="match status" value="1"/>
</dbReference>
<dbReference type="Pfam" id="PF02468">
    <property type="entry name" value="PsbN"/>
    <property type="match status" value="1"/>
</dbReference>
<keyword id="KW-0150">Chloroplast</keyword>
<keyword id="KW-0472">Membrane</keyword>
<keyword id="KW-0934">Plastid</keyword>
<keyword id="KW-0793">Thylakoid</keyword>
<keyword id="KW-0812">Transmembrane</keyword>
<keyword id="KW-1133">Transmembrane helix</keyword>